<organism>
    <name type="scientific">Corynebacterium aurimucosum (strain ATCC 700975 / DSM 44827 / CIP 107346 / CN-1)</name>
    <name type="common">Corynebacterium nigricans</name>
    <dbReference type="NCBI Taxonomy" id="548476"/>
    <lineage>
        <taxon>Bacteria</taxon>
        <taxon>Bacillati</taxon>
        <taxon>Actinomycetota</taxon>
        <taxon>Actinomycetes</taxon>
        <taxon>Mycobacteriales</taxon>
        <taxon>Corynebacteriaceae</taxon>
        <taxon>Corynebacterium</taxon>
    </lineage>
</organism>
<comment type="function">
    <text evidence="1">Bidirectionally degrades single-stranded DNA into large acid-insoluble oligonucleotides, which are then degraded further into small acid-soluble oligonucleotides.</text>
</comment>
<comment type="catalytic activity">
    <reaction evidence="1">
        <text>Exonucleolytic cleavage in either 5'- to 3'- or 3'- to 5'-direction to yield nucleoside 5'-phosphates.</text>
        <dbReference type="EC" id="3.1.11.6"/>
    </reaction>
</comment>
<comment type="subunit">
    <text evidence="1">Heterooligomer composed of large and small subunits.</text>
</comment>
<comment type="subcellular location">
    <subcellularLocation>
        <location evidence="1">Cytoplasm</location>
    </subcellularLocation>
</comment>
<comment type="similarity">
    <text evidence="1">Belongs to the XseB family.</text>
</comment>
<proteinExistence type="inferred from homology"/>
<name>EX7S_CORA7</name>
<reference key="1">
    <citation type="journal article" date="2010" name="BMC Genomics">
        <title>Complete genome sequence and lifestyle of black-pigmented Corynebacterium aurimucosum ATCC 700975 (formerly C. nigricans CN-1) isolated from a vaginal swab of a woman with spontaneous abortion.</title>
        <authorList>
            <person name="Trost E."/>
            <person name="Gotker S."/>
            <person name="Schneider J."/>
            <person name="Schneiker-Bekel S."/>
            <person name="Szczepanowski R."/>
            <person name="Tilker A."/>
            <person name="Viehoever P."/>
            <person name="Arnold W."/>
            <person name="Bekel T."/>
            <person name="Blom J."/>
            <person name="Gartemann K.H."/>
            <person name="Linke B."/>
            <person name="Goesmann A."/>
            <person name="Puhler A."/>
            <person name="Shukla S.K."/>
            <person name="Tauch A."/>
        </authorList>
    </citation>
    <scope>NUCLEOTIDE SEQUENCE [LARGE SCALE GENOMIC DNA]</scope>
    <source>
        <strain>ATCC 700975 / DSM 44827 / CIP 107346 / CN-1</strain>
    </source>
</reference>
<protein>
    <recommendedName>
        <fullName evidence="1">Exodeoxyribonuclease 7 small subunit</fullName>
        <ecNumber evidence="1">3.1.11.6</ecNumber>
    </recommendedName>
    <alternativeName>
        <fullName evidence="1">Exodeoxyribonuclease VII small subunit</fullName>
        <shortName evidence="1">Exonuclease VII small subunit</shortName>
    </alternativeName>
</protein>
<sequence>MTDTIGAGQPGQDAFPPVEELSYEQARDELIETVKILELGQMGLDESLKYWERGEALAKACEAHLDGASKRVEEALRKNAEGTDSAAHNEEAGED</sequence>
<keyword id="KW-0963">Cytoplasm</keyword>
<keyword id="KW-0269">Exonuclease</keyword>
<keyword id="KW-0378">Hydrolase</keyword>
<keyword id="KW-0540">Nuclease</keyword>
<keyword id="KW-1185">Reference proteome</keyword>
<evidence type="ECO:0000255" key="1">
    <source>
        <dbReference type="HAMAP-Rule" id="MF_00337"/>
    </source>
</evidence>
<dbReference type="EC" id="3.1.11.6" evidence="1"/>
<dbReference type="EMBL" id="CP001601">
    <property type="protein sequence ID" value="ACP32538.1"/>
    <property type="molecule type" value="Genomic_DNA"/>
</dbReference>
<dbReference type="RefSeq" id="WP_010187330.1">
    <property type="nucleotide sequence ID" value="NZ_ACLH01000012.1"/>
</dbReference>
<dbReference type="SMR" id="C3PFD4"/>
<dbReference type="STRING" id="548476.cauri_0941"/>
<dbReference type="GeneID" id="31923567"/>
<dbReference type="KEGG" id="car:cauri_0941"/>
<dbReference type="eggNOG" id="COG1722">
    <property type="taxonomic scope" value="Bacteria"/>
</dbReference>
<dbReference type="HOGENOM" id="CLU_145918_0_2_11"/>
<dbReference type="OrthoDB" id="5244334at2"/>
<dbReference type="Proteomes" id="UP000002077">
    <property type="component" value="Chromosome"/>
</dbReference>
<dbReference type="GO" id="GO:0005829">
    <property type="term" value="C:cytosol"/>
    <property type="evidence" value="ECO:0007669"/>
    <property type="project" value="TreeGrafter"/>
</dbReference>
<dbReference type="GO" id="GO:0009318">
    <property type="term" value="C:exodeoxyribonuclease VII complex"/>
    <property type="evidence" value="ECO:0007669"/>
    <property type="project" value="InterPro"/>
</dbReference>
<dbReference type="GO" id="GO:0008855">
    <property type="term" value="F:exodeoxyribonuclease VII activity"/>
    <property type="evidence" value="ECO:0007669"/>
    <property type="project" value="UniProtKB-UniRule"/>
</dbReference>
<dbReference type="GO" id="GO:0006308">
    <property type="term" value="P:DNA catabolic process"/>
    <property type="evidence" value="ECO:0007669"/>
    <property type="project" value="UniProtKB-UniRule"/>
</dbReference>
<dbReference type="Gene3D" id="1.10.287.1040">
    <property type="entry name" value="Exonuclease VII, small subunit"/>
    <property type="match status" value="1"/>
</dbReference>
<dbReference type="HAMAP" id="MF_00337">
    <property type="entry name" value="Exonuc_7_S"/>
    <property type="match status" value="1"/>
</dbReference>
<dbReference type="InterPro" id="IPR003761">
    <property type="entry name" value="Exonuc_VII_S"/>
</dbReference>
<dbReference type="InterPro" id="IPR037004">
    <property type="entry name" value="Exonuc_VII_ssu_sf"/>
</dbReference>
<dbReference type="NCBIfam" id="NF002139">
    <property type="entry name" value="PRK00977.1-3"/>
    <property type="match status" value="1"/>
</dbReference>
<dbReference type="NCBIfam" id="TIGR01280">
    <property type="entry name" value="xseB"/>
    <property type="match status" value="1"/>
</dbReference>
<dbReference type="PANTHER" id="PTHR34137">
    <property type="entry name" value="EXODEOXYRIBONUCLEASE 7 SMALL SUBUNIT"/>
    <property type="match status" value="1"/>
</dbReference>
<dbReference type="PANTHER" id="PTHR34137:SF1">
    <property type="entry name" value="EXODEOXYRIBONUCLEASE 7 SMALL SUBUNIT"/>
    <property type="match status" value="1"/>
</dbReference>
<dbReference type="Pfam" id="PF02609">
    <property type="entry name" value="Exonuc_VII_S"/>
    <property type="match status" value="1"/>
</dbReference>
<dbReference type="SUPFAM" id="SSF116842">
    <property type="entry name" value="XseB-like"/>
    <property type="match status" value="1"/>
</dbReference>
<feature type="chain" id="PRO_1000200248" description="Exodeoxyribonuclease 7 small subunit">
    <location>
        <begin position="1"/>
        <end position="95"/>
    </location>
</feature>
<gene>
    <name evidence="1" type="primary">xseB</name>
    <name type="ordered locus">cauri_0941</name>
</gene>
<accession>C3PFD4</accession>